<evidence type="ECO:0000255" key="1">
    <source>
        <dbReference type="HAMAP-Rule" id="MF_04065"/>
    </source>
</evidence>
<evidence type="ECO:0000256" key="2">
    <source>
        <dbReference type="SAM" id="MobiDB-lite"/>
    </source>
</evidence>
<sequence length="757" mass="86503">MDVNPTLLFLKVPAQNAISTTFPYTGDPPYSHGTGTGYTMDTVNRTHQYSEKGKWTTNTETGAPQLNPIDGPLPENHEPSGYAQTDCVLEAMAFLEESHPGIFENSCLETMEVVQQTRVDKLTQGRQTYDWTLNRNQPAATALANTIEVFRSNDLTANESGRLIDFLKDVMESMDKEEMEITTHFQRKRRIRDNMTKKMVTQRTIGKKKQRLNKKSYLIRALTLNTMTKDAERGKLKRRAIATPGMQIRGFVYFVETLARSICEKLEQSGLPVGGNEKKAKLANVVRKMMTNSQDTELSFTITGDNTKWNENQNPRMFLAMITYITRNQPDWFRNVLSIAPIMFSNKMARLGKGYMFESKSMKLRTQIPAEMLANIDLKYFNELTKKKIEKIRPLLIDGTASLSPGMMMGMFNMLSTVLGVSILNLGQKRYTKTTYWWDGLQSSDDFALIVNAPNHEGIQAGVDRFYRTCKLVGINMSKKKSYINRTGTFEFTSFFYRYGFVANFSMELPSFGVSGINESADMSIGVTVIKNNMINNDLGPATAQMALQLFIKDYRYTYRCHRGDTQIQTRRSFELKKLWEQTRSKAGLLVSDGGPNLYNIRNLHIPEVCLKWELMDEDYQGRLCNPLNPFVSHKEIESVNNAVVMPAHGPAKSMEYDAVATTHSWIPKRNRSILNTSQRGILEDEQMYQKCCNLFEKFFPSSSYRRPVGISSMVEAMVSRARIDARIDFESGRIKKEEFAEIMKICSTIEELRRQK</sequence>
<comment type="function">
    <text evidence="1">RNA-dependent RNA polymerase which is responsible for replication and transcription of virus RNA segments. The transcription of viral mRNAs occurs by a unique mechanism called cap-snatching. 5' methylated caps of cellular mRNAs are cleaved after 10-13 nucleotides by PA. In turn, these short capped RNAs are used as primers by PB1 for transcription of viral mRNAs. During virus replication, PB1 initiates RNA synthesis and copy vRNA into complementary RNA (cRNA) which in turn serves as a template for the production of more vRNAs.</text>
</comment>
<comment type="catalytic activity">
    <reaction evidence="1">
        <text>RNA(n) + a ribonucleoside 5'-triphosphate = RNA(n+1) + diphosphate</text>
        <dbReference type="Rhea" id="RHEA:21248"/>
        <dbReference type="Rhea" id="RHEA-COMP:14527"/>
        <dbReference type="Rhea" id="RHEA-COMP:17342"/>
        <dbReference type="ChEBI" id="CHEBI:33019"/>
        <dbReference type="ChEBI" id="CHEBI:61557"/>
        <dbReference type="ChEBI" id="CHEBI:140395"/>
        <dbReference type="EC" id="2.7.7.48"/>
    </reaction>
</comment>
<comment type="subunit">
    <text evidence="1">Influenza RNA polymerase is composed of three subunits: PB1, PB2 and PA. Interacts (via N-terminus) with PA (via C-terminus). Interacts (via C-terminus) with PB2 (via N-terminus); this interaction is essential for transcription initiation.</text>
</comment>
<comment type="subcellular location">
    <subcellularLocation>
        <location evidence="1">Host nucleus</location>
    </subcellularLocation>
    <subcellularLocation>
        <location evidence="1">Host cytoplasm</location>
    </subcellularLocation>
</comment>
<comment type="PTM">
    <text evidence="1">Phosphorylated by host PRKCA.</text>
</comment>
<comment type="similarity">
    <text evidence="1">Belongs to the influenza viruses polymerase PB1 family.</text>
</comment>
<proteinExistence type="inferred from homology"/>
<organism>
    <name type="scientific">Influenza A virus (strain A/Silky Chicken/Hong Kong/YU100/2002 H5N1 genotype X3)</name>
    <dbReference type="NCBI Taxonomy" id="284214"/>
    <lineage>
        <taxon>Viruses</taxon>
        <taxon>Riboviria</taxon>
        <taxon>Orthornavirae</taxon>
        <taxon>Negarnaviricota</taxon>
        <taxon>Polyploviricotina</taxon>
        <taxon>Insthoviricetes</taxon>
        <taxon>Articulavirales</taxon>
        <taxon>Orthomyxoviridae</taxon>
        <taxon>Alphainfluenzavirus</taxon>
        <taxon>Alphainfluenzavirus influenzae</taxon>
        <taxon>Influenza A virus</taxon>
    </lineage>
</organism>
<accession>Q6DNS3</accession>
<gene>
    <name evidence="1" type="primary">PB1</name>
</gene>
<keyword id="KW-1262">Eukaryotic host gene expression shutoff by virus</keyword>
<keyword id="KW-1191">Eukaryotic host transcription shutoff by virus</keyword>
<keyword id="KW-1035">Host cytoplasm</keyword>
<keyword id="KW-1190">Host gene expression shutoff by virus</keyword>
<keyword id="KW-1048">Host nucleus</keyword>
<keyword id="KW-0945">Host-virus interaction</keyword>
<keyword id="KW-1104">Inhibition of host RNA polymerase II by virus</keyword>
<keyword id="KW-0547">Nucleotide-binding</keyword>
<keyword id="KW-0548">Nucleotidyltransferase</keyword>
<keyword id="KW-0597">Phosphoprotein</keyword>
<keyword id="KW-0696">RNA-directed RNA polymerase</keyword>
<keyword id="KW-0808">Transferase</keyword>
<keyword id="KW-0693">Viral RNA replication</keyword>
<keyword id="KW-1195">Viral transcription</keyword>
<feature type="chain" id="PRO_0000311166" description="RNA-directed RNA polymerase catalytic subunit">
    <location>
        <begin position="1"/>
        <end position="757"/>
    </location>
</feature>
<feature type="domain" description="RdRp catalytic" evidence="1">
    <location>
        <begin position="286"/>
        <end position="483"/>
    </location>
</feature>
<feature type="region of interest" description="Disordered" evidence="2">
    <location>
        <begin position="50"/>
        <end position="81"/>
    </location>
</feature>
<feature type="region of interest" description="Promoter-binding site" evidence="1">
    <location>
        <begin position="249"/>
        <end position="256"/>
    </location>
</feature>
<feature type="short sequence motif" description="Nuclear localization signal" evidence="1">
    <location>
        <begin position="187"/>
        <end position="195"/>
    </location>
</feature>
<feature type="short sequence motif" description="Nuclear localization signal" evidence="1">
    <location>
        <begin position="203"/>
        <end position="216"/>
    </location>
</feature>
<feature type="compositionally biased region" description="Polar residues" evidence="2">
    <location>
        <begin position="55"/>
        <end position="64"/>
    </location>
</feature>
<organismHost>
    <name type="scientific">Aves</name>
    <dbReference type="NCBI Taxonomy" id="8782"/>
</organismHost>
<organismHost>
    <name type="scientific">Felis catus</name>
    <name type="common">Cat</name>
    <name type="synonym">Felis silvestris catus</name>
    <dbReference type="NCBI Taxonomy" id="9685"/>
</organismHost>
<organismHost>
    <name type="scientific">Homo sapiens</name>
    <name type="common">Human</name>
    <dbReference type="NCBI Taxonomy" id="9606"/>
</organismHost>
<organismHost>
    <name type="scientific">Panthera pardus</name>
    <name type="common">Leopard</name>
    <name type="synonym">Felis pardus</name>
    <dbReference type="NCBI Taxonomy" id="9691"/>
</organismHost>
<organismHost>
    <name type="scientific">Panthera tigris</name>
    <name type="common">Tiger</name>
    <dbReference type="NCBI Taxonomy" id="9694"/>
</organismHost>
<organismHost>
    <name type="scientific">Sus scrofa</name>
    <name type="common">Pig</name>
    <dbReference type="NCBI Taxonomy" id="9823"/>
</organismHost>
<name>RDRP_I02A4</name>
<dbReference type="EC" id="2.7.7.48" evidence="1"/>
<dbReference type="EMBL" id="AY651679">
    <property type="protein sequence ID" value="AAT73510.2"/>
    <property type="molecule type" value="Genomic_RNA"/>
</dbReference>
<dbReference type="SMR" id="Q6DNS3"/>
<dbReference type="GO" id="GO:0030430">
    <property type="term" value="C:host cell cytoplasm"/>
    <property type="evidence" value="ECO:0007669"/>
    <property type="project" value="UniProtKB-SubCell"/>
</dbReference>
<dbReference type="GO" id="GO:0042025">
    <property type="term" value="C:host cell nucleus"/>
    <property type="evidence" value="ECO:0007669"/>
    <property type="project" value="UniProtKB-SubCell"/>
</dbReference>
<dbReference type="GO" id="GO:0000166">
    <property type="term" value="F:nucleotide binding"/>
    <property type="evidence" value="ECO:0007669"/>
    <property type="project" value="UniProtKB-UniRule"/>
</dbReference>
<dbReference type="GO" id="GO:0003723">
    <property type="term" value="F:RNA binding"/>
    <property type="evidence" value="ECO:0007669"/>
    <property type="project" value="InterPro"/>
</dbReference>
<dbReference type="GO" id="GO:0003968">
    <property type="term" value="F:RNA-directed RNA polymerase activity"/>
    <property type="evidence" value="ECO:0007669"/>
    <property type="project" value="UniProtKB-UniRule"/>
</dbReference>
<dbReference type="GO" id="GO:0006351">
    <property type="term" value="P:DNA-templated transcription"/>
    <property type="evidence" value="ECO:0007669"/>
    <property type="project" value="UniProtKB-UniRule"/>
</dbReference>
<dbReference type="GO" id="GO:0039657">
    <property type="term" value="P:symbiont-mediated suppression of host gene expression"/>
    <property type="evidence" value="ECO:0007669"/>
    <property type="project" value="UniProtKB-KW"/>
</dbReference>
<dbReference type="GO" id="GO:0039523">
    <property type="term" value="P:symbiont-mediated suppression of host mRNA transcription via inhibition of RNA polymerase II activity"/>
    <property type="evidence" value="ECO:0007669"/>
    <property type="project" value="UniProtKB-UniRule"/>
</dbReference>
<dbReference type="GO" id="GO:0039694">
    <property type="term" value="P:viral RNA genome replication"/>
    <property type="evidence" value="ECO:0007669"/>
    <property type="project" value="UniProtKB-UniRule"/>
</dbReference>
<dbReference type="GO" id="GO:0019083">
    <property type="term" value="P:viral transcription"/>
    <property type="evidence" value="ECO:0007669"/>
    <property type="project" value="UniProtKB-KW"/>
</dbReference>
<dbReference type="Gene3D" id="6.10.140.720">
    <property type="match status" value="1"/>
</dbReference>
<dbReference type="HAMAP" id="MF_04065">
    <property type="entry name" value="INFV_RDRP"/>
    <property type="match status" value="1"/>
</dbReference>
<dbReference type="InterPro" id="IPR007099">
    <property type="entry name" value="RNA-dir_pol_NSvirus"/>
</dbReference>
<dbReference type="InterPro" id="IPR001407">
    <property type="entry name" value="RNA_pol_PB1_influenza"/>
</dbReference>
<dbReference type="Pfam" id="PF00602">
    <property type="entry name" value="Flu_PB1"/>
    <property type="match status" value="1"/>
</dbReference>
<dbReference type="PIRSF" id="PIRSF000827">
    <property type="entry name" value="RdRPol_OMV"/>
    <property type="match status" value="1"/>
</dbReference>
<dbReference type="PROSITE" id="PS50525">
    <property type="entry name" value="RDRP_SSRNA_NEG_SEG"/>
    <property type="match status" value="1"/>
</dbReference>
<protein>
    <recommendedName>
        <fullName evidence="1">RNA-directed RNA polymerase catalytic subunit</fullName>
        <ecNumber evidence="1">2.7.7.48</ecNumber>
    </recommendedName>
    <alternativeName>
        <fullName evidence="1">Polymerase basic protein 1</fullName>
        <shortName evidence="1">PB1</shortName>
    </alternativeName>
    <alternativeName>
        <fullName evidence="1">RNA-directed RNA polymerase subunit P1</fullName>
    </alternativeName>
</protein>
<reference key="1">
    <citation type="journal article" date="2004" name="Nature">
        <title>Genesis of a highly pathogenic and potentially pandemic H5N1 influenza virus in eastern Asia.</title>
        <authorList>
            <person name="Li K.S."/>
            <person name="Guan Y."/>
            <person name="Wang J."/>
            <person name="Smith G.J.D."/>
            <person name="Xu K.M."/>
            <person name="Duan L."/>
            <person name="Rahardjo A.P."/>
            <person name="Puthavathana P."/>
            <person name="Buranathai C."/>
            <person name="Nguyen T.D."/>
            <person name="Estoepangestie A.T.S."/>
            <person name="Chaisingh A."/>
            <person name="Auewarakul P."/>
            <person name="Long H.T."/>
            <person name="Hanh N.T.H."/>
            <person name="Webby R.J."/>
            <person name="Poon L.L.M."/>
            <person name="Chen H."/>
            <person name="Shortridge K.F."/>
            <person name="Yuen K.Y."/>
            <person name="Webster R.G."/>
            <person name="Peiris J.S.M."/>
        </authorList>
    </citation>
    <scope>NUCLEOTIDE SEQUENCE [GENOMIC RNA]</scope>
</reference>
<reference key="2">
    <citation type="submission" date="2008-03" db="EMBL/GenBank/DDBJ databases">
        <authorList>
            <person name="Li K.S."/>
            <person name="Guan Y."/>
            <person name="Wang J."/>
            <person name="Smith G.J.D."/>
            <person name="Xu K.M."/>
            <person name="Duan L."/>
            <person name="Rahardjo A.P."/>
            <person name="Puthavathana P."/>
            <person name="Buranathai C."/>
            <person name="Nguyen T.D."/>
            <person name="Estoepangestie A.T.S."/>
            <person name="Chaisingh A."/>
            <person name="Auewarakul P."/>
            <person name="Long H.T."/>
            <person name="Hanh N.T.H."/>
            <person name="Lim W."/>
            <person name="Webby R.J."/>
            <person name="Poon L.L.M."/>
            <person name="Chen H."/>
            <person name="Shortridge K.F."/>
            <person name="Yuen K.Y."/>
            <person name="Webster R.G."/>
            <person name="Peiris J.S.M."/>
        </authorList>
    </citation>
    <scope>SEQUENCE REVISION</scope>
</reference>